<sequence>MVRAQRTKRASVTDIYKGCKASGTCPPDVLNKVEQNTLADKILKYGSVGVFFGGLGIGTGKGTGGATGYVPLRPGVRVGGTPTVVRPAVIPEIIGPTELIPVDSIAPIDPEAPSIVSLTDSGAAADLFPSEAETIAEVHPTPVDIGIDTPIVAGGRDAILEVVDTNPPTRFSVTRTQYDNPSFQIISESTPITGEASLADHVFVFEGSGGQHVGAVTEEIELDTYPSRYSFEIEEATPPRRTSTPIERISQEFRNLRRALYNRRLTEQVQVKNPLFLTTPSKLVRFQFDNPVFDEEVTQIFERDVAEVEEPPDRDFLDIDRLGRPLLTESTEGRIRLSRLGQRASIQTRSGTRVGSRVHFYTDLSTINTEEPIELELLGEHSGDASVIEEPLQSTVIDMNLDDVEAIQDTIDTADDYNSADLLLDNAIEEFNNSQLVFGTSDRSSSAYSIPRFESPRETIVYVQDIEGNQVIYPGPTERPTIIFPLPSAPAVVIHTLDKSFDYYLHPSLRKKRRKRKYL</sequence>
<protein>
    <recommendedName>
        <fullName evidence="1">Minor capsid protein L2</fullName>
    </recommendedName>
</protein>
<accession>P50797</accession>
<comment type="function">
    <text evidence="1">Minor protein of the capsid that localizes along the inner surface of the virion, within the central cavities beneath the L1 pentamers. Plays a role in capsid stabilization through interaction with the major capsid protein L1. Once the virion enters the host cell, L2 escorts the genomic DNA into the nucleus by promoting escape from the endosomal compartments and traffic through the host Golgi network. Mechanistically, the C-terminus of L2 possesses a cell-penetrating peptide that protudes from the host endosome, interacts with host cytoplasmic retromer cargo and thereby mediates the capsid delivery to the host trans-Golgi network. Plays a role through its interaction with host dynein in the intracellular microtubule-dependent transport of viral capsid toward the nucleus. Mediates the viral genome import into the nucleus through binding to host importins. Once within the nucleus, L2 localizes viral genomes to host PML bodies in order to activate early gene expression for establishment of infection. Later on, promotes late gene expression by interacting with the viral E2 protein and by inhibiting its transcriptional activation functions. During virion assembly, encapsidates the genome by direct interaction with the viral DNA.</text>
</comment>
<comment type="subunit">
    <text evidence="1">Interacts with major capsid protein L1. Interacts with E2; this interaction inhibits E2 transcriptional activity but not the DNA replication function E2. Interacts with host GADD45GIP1. Interacts with host HSPA8; this interaction is required for L2 nuclear translocation. Interacts with host importins KPNB2 and KPNB3. Forms a complex with importin alpha2-beta1 heterodimers via interaction with the importin alpha2 adapter. Interacts with host DYNLT1; this interaction is essential for virus intracellular transport during entry. Interacts (via C-terminus) with host retromer subunits VPS35 and VPS29.</text>
</comment>
<comment type="subcellular location">
    <subcellularLocation>
        <location evidence="1">Virion</location>
    </subcellularLocation>
    <subcellularLocation>
        <location evidence="1">Host nucleus</location>
    </subcellularLocation>
    <subcellularLocation>
        <location evidence="1">Host early endosome</location>
    </subcellularLocation>
    <subcellularLocation>
        <location evidence="1">Host Golgi apparatus</location>
    </subcellularLocation>
</comment>
<comment type="PTM">
    <text evidence="1">Highly phosphorylated.</text>
</comment>
<comment type="similarity">
    <text evidence="1">Belongs to the papillomaviridae L2 protein family.</text>
</comment>
<reference key="1">
    <citation type="submission" date="1995-10" db="EMBL/GenBank/DDBJ databases">
        <authorList>
            <person name="Delius H."/>
        </authorList>
    </citation>
    <scope>NUCLEOTIDE SEQUENCE [GENOMIC DNA]</scope>
</reference>
<keyword id="KW-0167">Capsid protein</keyword>
<keyword id="KW-1176">Cytoplasmic inwards viral transport</keyword>
<keyword id="KW-1015">Disulfide bond</keyword>
<keyword id="KW-0238">DNA-binding</keyword>
<keyword id="KW-1039">Host endosome</keyword>
<keyword id="KW-1040">Host Golgi apparatus</keyword>
<keyword id="KW-1048">Host nucleus</keyword>
<keyword id="KW-0945">Host-virus interaction</keyword>
<keyword id="KW-0426">Late protein</keyword>
<keyword id="KW-1177">Microtubular inwards viral transport</keyword>
<keyword id="KW-0597">Phosphoprotein</keyword>
<keyword id="KW-1185">Reference proteome</keyword>
<keyword id="KW-1163">Viral penetration into host nucleus</keyword>
<keyword id="KW-0946">Virion</keyword>
<keyword id="KW-1160">Virus entry into host cell</keyword>
<organismHost>
    <name type="scientific">Homo sapiens</name>
    <name type="common">Human</name>
    <dbReference type="NCBI Taxonomy" id="9606"/>
</organismHost>
<feature type="chain" id="PRO_0000133590" description="Minor capsid protein L2">
    <location>
        <begin position="1"/>
        <end position="519"/>
    </location>
</feature>
<feature type="short sequence motif" description="Nuclear localization signal" evidence="1">
    <location>
        <begin position="1"/>
        <end position="10"/>
    </location>
</feature>
<feature type="short sequence motif" description="Nuclear localization signal" evidence="1">
    <location>
        <begin position="511"/>
        <end position="518"/>
    </location>
</feature>
<feature type="disulfide bond" evidence="1">
    <location>
        <begin position="19"/>
        <end position="25"/>
    </location>
</feature>
<evidence type="ECO:0000255" key="1">
    <source>
        <dbReference type="HAMAP-Rule" id="MF_04003"/>
    </source>
</evidence>
<dbReference type="EMBL" id="U31781">
    <property type="protein sequence ID" value="AAA79413.1"/>
    <property type="molecule type" value="Genomic_DNA"/>
</dbReference>
<dbReference type="Proteomes" id="UP000009112">
    <property type="component" value="Segment"/>
</dbReference>
<dbReference type="GO" id="GO:0043657">
    <property type="term" value="C:host cell"/>
    <property type="evidence" value="ECO:0007669"/>
    <property type="project" value="GOC"/>
</dbReference>
<dbReference type="GO" id="GO:0044174">
    <property type="term" value="C:host cell endosome"/>
    <property type="evidence" value="ECO:0007669"/>
    <property type="project" value="UniProtKB-KW"/>
</dbReference>
<dbReference type="GO" id="GO:0044177">
    <property type="term" value="C:host cell Golgi apparatus"/>
    <property type="evidence" value="ECO:0007669"/>
    <property type="project" value="UniProtKB-SubCell"/>
</dbReference>
<dbReference type="GO" id="GO:0042025">
    <property type="term" value="C:host cell nucleus"/>
    <property type="evidence" value="ECO:0007669"/>
    <property type="project" value="UniProtKB-SubCell"/>
</dbReference>
<dbReference type="GO" id="GO:0019028">
    <property type="term" value="C:viral capsid"/>
    <property type="evidence" value="ECO:0007669"/>
    <property type="project" value="UniProtKB-UniRule"/>
</dbReference>
<dbReference type="GO" id="GO:0003677">
    <property type="term" value="F:DNA binding"/>
    <property type="evidence" value="ECO:0007669"/>
    <property type="project" value="UniProtKB-UniRule"/>
</dbReference>
<dbReference type="GO" id="GO:0005198">
    <property type="term" value="F:structural molecule activity"/>
    <property type="evidence" value="ECO:0007669"/>
    <property type="project" value="UniProtKB-UniRule"/>
</dbReference>
<dbReference type="GO" id="GO:0075521">
    <property type="term" value="P:microtubule-dependent intracellular transport of viral material towards nucleus"/>
    <property type="evidence" value="ECO:0007669"/>
    <property type="project" value="UniProtKB-UniRule"/>
</dbReference>
<dbReference type="GO" id="GO:0046718">
    <property type="term" value="P:symbiont entry into host cell"/>
    <property type="evidence" value="ECO:0007669"/>
    <property type="project" value="UniProtKB-KW"/>
</dbReference>
<dbReference type="GO" id="GO:0075732">
    <property type="term" value="P:viral penetration into host nucleus"/>
    <property type="evidence" value="ECO:0007669"/>
    <property type="project" value="UniProtKB-KW"/>
</dbReference>
<dbReference type="HAMAP" id="MF_04003">
    <property type="entry name" value="PPV_L2"/>
    <property type="match status" value="1"/>
</dbReference>
<dbReference type="InterPro" id="IPR000784">
    <property type="entry name" value="Late_L2"/>
</dbReference>
<dbReference type="Pfam" id="PF00513">
    <property type="entry name" value="Late_protein_L2"/>
    <property type="match status" value="1"/>
</dbReference>
<proteinExistence type="inferred from homology"/>
<name>VL2_HPV23</name>
<gene>
    <name evidence="1" type="primary">L2</name>
</gene>
<organism>
    <name type="scientific">Human papillomavirus 23</name>
    <dbReference type="NCBI Taxonomy" id="37955"/>
    <lineage>
        <taxon>Viruses</taxon>
        <taxon>Monodnaviria</taxon>
        <taxon>Shotokuvirae</taxon>
        <taxon>Cossaviricota</taxon>
        <taxon>Papovaviricetes</taxon>
        <taxon>Zurhausenvirales</taxon>
        <taxon>Papillomaviridae</taxon>
        <taxon>Firstpapillomavirinae</taxon>
        <taxon>Betapapillomavirus</taxon>
        <taxon>Betapapillomavirus 2</taxon>
    </lineage>
</organism>